<reference key="1">
    <citation type="journal article" date="2009" name="PLoS Genet.">
        <title>Organised genome dynamics in the Escherichia coli species results in highly diverse adaptive paths.</title>
        <authorList>
            <person name="Touchon M."/>
            <person name="Hoede C."/>
            <person name="Tenaillon O."/>
            <person name="Barbe V."/>
            <person name="Baeriswyl S."/>
            <person name="Bidet P."/>
            <person name="Bingen E."/>
            <person name="Bonacorsi S."/>
            <person name="Bouchier C."/>
            <person name="Bouvet O."/>
            <person name="Calteau A."/>
            <person name="Chiapello H."/>
            <person name="Clermont O."/>
            <person name="Cruveiller S."/>
            <person name="Danchin A."/>
            <person name="Diard M."/>
            <person name="Dossat C."/>
            <person name="Karoui M.E."/>
            <person name="Frapy E."/>
            <person name="Garry L."/>
            <person name="Ghigo J.M."/>
            <person name="Gilles A.M."/>
            <person name="Johnson J."/>
            <person name="Le Bouguenec C."/>
            <person name="Lescat M."/>
            <person name="Mangenot S."/>
            <person name="Martinez-Jehanne V."/>
            <person name="Matic I."/>
            <person name="Nassif X."/>
            <person name="Oztas S."/>
            <person name="Petit M.A."/>
            <person name="Pichon C."/>
            <person name="Rouy Z."/>
            <person name="Ruf C.S."/>
            <person name="Schneider D."/>
            <person name="Tourret J."/>
            <person name="Vacherie B."/>
            <person name="Vallenet D."/>
            <person name="Medigue C."/>
            <person name="Rocha E.P.C."/>
            <person name="Denamur E."/>
        </authorList>
    </citation>
    <scope>NUCLEOTIDE SEQUENCE [LARGE SCALE GENOMIC DNA]</scope>
    <source>
        <strain>IAI39 / ExPEC</strain>
    </source>
</reference>
<sequence length="382" mass="42385">MTEQRPLTIALVAGETSGDILGAGLIRALKERVPNARFVGVAGPRMQAEGCEAWYEMEELAVMGIVEVLGRLRRLLHIRADLTKRFGELKPDVFVGIDAPDFNITLEGNLKKQGIKTIHYVSPSVWAWRQKRVFKIGRATDLVLAFLPFEKAFYDKYNVPCRFIGHTMADAMPLDPDKNGARDVLGIPHDAHCLALLPGSRGAEVEMLSADFLKTAQLLRQTYPDLEIVVPLVNAKRREQFERIKAEVAPDLAVHLLDGMGREAMVASDAALLASGTAALECMLAKCPMVVGYRMKPFTFWLAKRLVKTEYVSLPNLLAGRELVKELLQEECEPQKLAAALLPLLANGKTSHAMHDTFRELHQQIRCNADEQAAQAVLELAQ</sequence>
<feature type="chain" id="PRO_1000191482" description="Lipid-A-disaccharide synthase">
    <location>
        <begin position="1"/>
        <end position="382"/>
    </location>
</feature>
<protein>
    <recommendedName>
        <fullName evidence="1">Lipid-A-disaccharide synthase</fullName>
        <ecNumber evidence="1">2.4.1.182</ecNumber>
    </recommendedName>
</protein>
<comment type="function">
    <text evidence="1">Condensation of UDP-2,3-diacylglucosamine and 2,3-diacylglucosamine-1-phosphate to form lipid A disaccharide, a precursor of lipid A, a phosphorylated glycolipid that anchors the lipopolysaccharide to the outer membrane of the cell.</text>
</comment>
<comment type="catalytic activity">
    <reaction evidence="1">
        <text>2-N,3-O-bis[(3R)-3-hydroxytetradecanoyl]-alpha-D-glucosaminyl 1-phosphate + UDP-2-N,3-O-bis[(3R)-3-hydroxytetradecanoyl]-alpha-D-glucosamine = lipid A disaccharide (E. coli) + UDP + H(+)</text>
        <dbReference type="Rhea" id="RHEA:22668"/>
        <dbReference type="ChEBI" id="CHEBI:15378"/>
        <dbReference type="ChEBI" id="CHEBI:57957"/>
        <dbReference type="ChEBI" id="CHEBI:58223"/>
        <dbReference type="ChEBI" id="CHEBI:58466"/>
        <dbReference type="ChEBI" id="CHEBI:78847"/>
    </reaction>
</comment>
<comment type="catalytic activity">
    <reaction evidence="1">
        <text>a lipid X + a UDP-2-N,3-O-bis[(3R)-3-hydroxyacyl]-alpha-D-glucosamine = a lipid A disaccharide + UDP + H(+)</text>
        <dbReference type="Rhea" id="RHEA:67828"/>
        <dbReference type="ChEBI" id="CHEBI:15378"/>
        <dbReference type="ChEBI" id="CHEBI:58223"/>
        <dbReference type="ChEBI" id="CHEBI:137748"/>
        <dbReference type="ChEBI" id="CHEBI:176338"/>
        <dbReference type="ChEBI" id="CHEBI:176343"/>
        <dbReference type="EC" id="2.4.1.182"/>
    </reaction>
</comment>
<comment type="pathway">
    <text evidence="1">Glycolipid biosynthesis; lipid IV(A) biosynthesis; lipid IV(A) from (3R)-3-hydroxytetradecanoyl-[acyl-carrier-protein] and UDP-N-acetyl-alpha-D-glucosamine: step 5/6.</text>
</comment>
<comment type="similarity">
    <text evidence="1">Belongs to the LpxB family.</text>
</comment>
<evidence type="ECO:0000255" key="1">
    <source>
        <dbReference type="HAMAP-Rule" id="MF_00392"/>
    </source>
</evidence>
<proteinExistence type="inferred from homology"/>
<keyword id="KW-0328">Glycosyltransferase</keyword>
<keyword id="KW-0441">Lipid A biosynthesis</keyword>
<keyword id="KW-0444">Lipid biosynthesis</keyword>
<keyword id="KW-0443">Lipid metabolism</keyword>
<keyword id="KW-0808">Transferase</keyword>
<gene>
    <name evidence="1" type="primary">lpxB</name>
    <name type="ordered locus">ECIAI39_0185</name>
</gene>
<accession>B7NIE4</accession>
<name>LPXB_ECO7I</name>
<dbReference type="EC" id="2.4.1.182" evidence="1"/>
<dbReference type="EMBL" id="CU928164">
    <property type="protein sequence ID" value="CAR16325.1"/>
    <property type="molecule type" value="Genomic_DNA"/>
</dbReference>
<dbReference type="RefSeq" id="WP_000139673.1">
    <property type="nucleotide sequence ID" value="NC_011750.1"/>
</dbReference>
<dbReference type="RefSeq" id="YP_002406231.1">
    <property type="nucleotide sequence ID" value="NC_011750.1"/>
</dbReference>
<dbReference type="SMR" id="B7NIE4"/>
<dbReference type="STRING" id="585057.ECIAI39_0185"/>
<dbReference type="CAZy" id="GT19">
    <property type="family name" value="Glycosyltransferase Family 19"/>
</dbReference>
<dbReference type="KEGG" id="ect:ECIAI39_0185"/>
<dbReference type="PATRIC" id="fig|585057.6.peg.198"/>
<dbReference type="HOGENOM" id="CLU_036577_3_0_6"/>
<dbReference type="UniPathway" id="UPA00359">
    <property type="reaction ID" value="UER00481"/>
</dbReference>
<dbReference type="Proteomes" id="UP000000749">
    <property type="component" value="Chromosome"/>
</dbReference>
<dbReference type="GO" id="GO:0016020">
    <property type="term" value="C:membrane"/>
    <property type="evidence" value="ECO:0007669"/>
    <property type="project" value="GOC"/>
</dbReference>
<dbReference type="GO" id="GO:0008915">
    <property type="term" value="F:lipid-A-disaccharide synthase activity"/>
    <property type="evidence" value="ECO:0007669"/>
    <property type="project" value="UniProtKB-UniRule"/>
</dbReference>
<dbReference type="GO" id="GO:0005543">
    <property type="term" value="F:phospholipid binding"/>
    <property type="evidence" value="ECO:0007669"/>
    <property type="project" value="TreeGrafter"/>
</dbReference>
<dbReference type="GO" id="GO:0009245">
    <property type="term" value="P:lipid A biosynthetic process"/>
    <property type="evidence" value="ECO:0007669"/>
    <property type="project" value="UniProtKB-UniRule"/>
</dbReference>
<dbReference type="CDD" id="cd01635">
    <property type="entry name" value="Glycosyltransferase_GTB-type"/>
    <property type="match status" value="1"/>
</dbReference>
<dbReference type="HAMAP" id="MF_00392">
    <property type="entry name" value="LpxB"/>
    <property type="match status" value="1"/>
</dbReference>
<dbReference type="InterPro" id="IPR003835">
    <property type="entry name" value="Glyco_trans_19"/>
</dbReference>
<dbReference type="NCBIfam" id="TIGR00215">
    <property type="entry name" value="lpxB"/>
    <property type="match status" value="1"/>
</dbReference>
<dbReference type="PANTHER" id="PTHR30372">
    <property type="entry name" value="LIPID-A-DISACCHARIDE SYNTHASE"/>
    <property type="match status" value="1"/>
</dbReference>
<dbReference type="PANTHER" id="PTHR30372:SF4">
    <property type="entry name" value="LIPID-A-DISACCHARIDE SYNTHASE, MITOCHONDRIAL-RELATED"/>
    <property type="match status" value="1"/>
</dbReference>
<dbReference type="Pfam" id="PF02684">
    <property type="entry name" value="LpxB"/>
    <property type="match status" value="1"/>
</dbReference>
<dbReference type="SUPFAM" id="SSF53756">
    <property type="entry name" value="UDP-Glycosyltransferase/glycogen phosphorylase"/>
    <property type="match status" value="1"/>
</dbReference>
<organism>
    <name type="scientific">Escherichia coli O7:K1 (strain IAI39 / ExPEC)</name>
    <dbReference type="NCBI Taxonomy" id="585057"/>
    <lineage>
        <taxon>Bacteria</taxon>
        <taxon>Pseudomonadati</taxon>
        <taxon>Pseudomonadota</taxon>
        <taxon>Gammaproteobacteria</taxon>
        <taxon>Enterobacterales</taxon>
        <taxon>Enterobacteriaceae</taxon>
        <taxon>Escherichia</taxon>
    </lineage>
</organism>